<name>EAEH_ECOLI</name>
<reference key="1">
    <citation type="submission" date="1997-01" db="EMBL/GenBank/DDBJ databases">
        <title>Sequence of minutes 4-25 of Escherichia coli.</title>
        <authorList>
            <person name="Chung E."/>
            <person name="Allen E."/>
            <person name="Araujo R."/>
            <person name="Aparicio A.M."/>
            <person name="Davis K."/>
            <person name="Duncan M."/>
            <person name="Federspiel N."/>
            <person name="Hyman R."/>
            <person name="Kalman S."/>
            <person name="Komp C."/>
            <person name="Kurdi O."/>
            <person name="Lew H."/>
            <person name="Lin D."/>
            <person name="Namath A."/>
            <person name="Oefner P."/>
            <person name="Roberts D."/>
            <person name="Schramm S."/>
            <person name="Davis R.W."/>
        </authorList>
    </citation>
    <scope>NUCLEOTIDE SEQUENCE [LARGE SCALE GENOMIC DNA]</scope>
    <source>
        <strain>K12 / MG1655 / ATCC 47076</strain>
    </source>
</reference>
<reference key="2">
    <citation type="journal article" date="1997" name="Science">
        <title>The complete genome sequence of Escherichia coli K-12.</title>
        <authorList>
            <person name="Blattner F.R."/>
            <person name="Plunkett G. III"/>
            <person name="Bloch C.A."/>
            <person name="Perna N.T."/>
            <person name="Burland V."/>
            <person name="Riley M."/>
            <person name="Collado-Vides J."/>
            <person name="Glasner J.D."/>
            <person name="Rode C.K."/>
            <person name="Mayhew G.F."/>
            <person name="Gregor J."/>
            <person name="Davis N.W."/>
            <person name="Kirkpatrick H.A."/>
            <person name="Goeden M.A."/>
            <person name="Rose D.J."/>
            <person name="Mau B."/>
            <person name="Shao Y."/>
        </authorList>
    </citation>
    <scope>NUCLEOTIDE SEQUENCE [LARGE SCALE GENOMIC DNA]</scope>
    <source>
        <strain>K12 / MG1655 / ATCC 47076</strain>
    </source>
</reference>
<reference key="3">
    <citation type="journal article" date="2006" name="Mol. Syst. Biol.">
        <title>Highly accurate genome sequences of Escherichia coli K-12 strains MG1655 and W3110.</title>
        <authorList>
            <person name="Hayashi K."/>
            <person name="Morooka N."/>
            <person name="Yamamoto Y."/>
            <person name="Fujita K."/>
            <person name="Isono K."/>
            <person name="Choi S."/>
            <person name="Ohtsubo E."/>
            <person name="Baba T."/>
            <person name="Wanner B.L."/>
            <person name="Mori H."/>
            <person name="Horiuchi T."/>
        </authorList>
    </citation>
    <scope>NUCLEOTIDE SEQUENCE [LARGE SCALE GENOMIC DNA]</scope>
    <source>
        <strain>K12 / W3110 / ATCC 27325 / DSM 5911</strain>
    </source>
</reference>
<reference key="4">
    <citation type="submission" date="1992-07" db="EMBL/GenBank/DDBJ databases">
        <authorList>
            <person name="Umeda M."/>
            <person name="Ohtsubo E."/>
        </authorList>
    </citation>
    <scope>NUCLEOTIDE SEQUENCE [GENOMIC DNA] OF 48-295</scope>
</reference>
<evidence type="ECO:0000255" key="1"/>
<evidence type="ECO:0000305" key="2"/>
<keyword id="KW-1185">Reference proteome</keyword>
<keyword id="KW-0732">Signal</keyword>
<proteinExistence type="uncertain"/>
<organism>
    <name type="scientific">Escherichia coli (strain K12)</name>
    <dbReference type="NCBI Taxonomy" id="83333"/>
    <lineage>
        <taxon>Bacteria</taxon>
        <taxon>Pseudomonadati</taxon>
        <taxon>Pseudomonadota</taxon>
        <taxon>Gammaproteobacteria</taxon>
        <taxon>Enterobacterales</taxon>
        <taxon>Enterobacteriaceae</taxon>
        <taxon>Escherichia</taxon>
    </lineage>
</organism>
<comment type="similarity">
    <text evidence="2">Belongs to the intimin/invasin family.</text>
</comment>
<comment type="caution">
    <text evidence="2">Could be the product of a pseudogene.</text>
</comment>
<feature type="signal peptide" evidence="1">
    <location>
        <begin position="1"/>
        <end position="25"/>
    </location>
</feature>
<feature type="chain" id="PRO_0000016468" description="Putative attaching and effacing protein homolog">
    <location>
        <begin position="26"/>
        <end position="295"/>
    </location>
</feature>
<feature type="sequence conflict" description="In Ref. 4." evidence="2" ref="4">
    <original>QHA</original>
    <variation>SMR</variation>
    <location>
        <begin position="48"/>
        <end position="50"/>
    </location>
</feature>
<feature type="sequence conflict" description="In Ref. 4." evidence="2" ref="4">
    <original>LTQQ</original>
    <variation>KVLGSLSTLLACQHIHIPYQQKFQP</variation>
    <location>
        <begin position="292"/>
        <end position="295"/>
    </location>
</feature>
<dbReference type="EMBL" id="U73857">
    <property type="protein sequence ID" value="AAB18025.1"/>
    <property type="molecule type" value="Genomic_DNA"/>
</dbReference>
<dbReference type="EMBL" id="U00096">
    <property type="status" value="NOT_ANNOTATED_CDS"/>
    <property type="molecule type" value="Genomic_DNA"/>
</dbReference>
<dbReference type="EMBL" id="AP009048">
    <property type="protein sequence ID" value="BAE76082.1"/>
    <property type="molecule type" value="Genomic_DNA"/>
</dbReference>
<dbReference type="EMBL" id="D12594">
    <property type="status" value="NOT_ANNOTATED_CDS"/>
    <property type="molecule type" value="Genomic_DNA"/>
</dbReference>
<dbReference type="PIR" id="A64756">
    <property type="entry name" value="A64756"/>
</dbReference>
<dbReference type="SMR" id="P36943"/>
<dbReference type="BioGRID" id="4259795">
    <property type="interactions" value="132"/>
</dbReference>
<dbReference type="FunCoup" id="P36943">
    <property type="interactions" value="522"/>
</dbReference>
<dbReference type="IntAct" id="P36943">
    <property type="interactions" value="5"/>
</dbReference>
<dbReference type="KEGG" id="ecj:JW0291"/>
<dbReference type="KEGG" id="ecoc:C3026_01460"/>
<dbReference type="KEGG" id="ecoc:C3026_24090"/>
<dbReference type="PATRIC" id="fig|83333.103.peg.1056"/>
<dbReference type="EchoBASE" id="EB2080"/>
<dbReference type="eggNOG" id="COG1388">
    <property type="taxonomic scope" value="Bacteria"/>
</dbReference>
<dbReference type="HOGENOM" id="CLU_1110106_0_0_6"/>
<dbReference type="InParanoid" id="P36943"/>
<dbReference type="OMA" id="YRITLMA"/>
<dbReference type="OrthoDB" id="8320584at2"/>
<dbReference type="PhylomeDB" id="P36943"/>
<dbReference type="Proteomes" id="UP000000625">
    <property type="component" value="Chromosome"/>
</dbReference>
<dbReference type="GO" id="GO:0009279">
    <property type="term" value="C:cell outer membrane"/>
    <property type="evidence" value="ECO:0000318"/>
    <property type="project" value="GO_Central"/>
</dbReference>
<dbReference type="GO" id="GO:0007155">
    <property type="term" value="P:cell adhesion"/>
    <property type="evidence" value="ECO:0007669"/>
    <property type="project" value="InterPro"/>
</dbReference>
<dbReference type="Gene3D" id="2.40.160.160">
    <property type="entry name" value="Inverse autotransporter, beta-domain"/>
    <property type="match status" value="1"/>
</dbReference>
<dbReference type="InterPro" id="IPR024519">
    <property type="entry name" value="IAT_beta"/>
</dbReference>
<dbReference type="InterPro" id="IPR038177">
    <property type="entry name" value="IAT_beta_sf"/>
</dbReference>
<dbReference type="InterPro" id="IPR051715">
    <property type="entry name" value="Intimin-Invasin_domain"/>
</dbReference>
<dbReference type="InterPro" id="IPR003535">
    <property type="entry name" value="Intimin/invasin_bac"/>
</dbReference>
<dbReference type="PANTHER" id="PTHR39576:SF2">
    <property type="entry name" value="ATTACHING AND EFFACING PROTEIN HOMOLOG-RELATED"/>
    <property type="match status" value="1"/>
</dbReference>
<dbReference type="PANTHER" id="PTHR39576">
    <property type="entry name" value="ATTACHING AND EFFACING PROTEIN HOMOLOG-RELATED-RELATED"/>
    <property type="match status" value="1"/>
</dbReference>
<dbReference type="Pfam" id="PF11924">
    <property type="entry name" value="IAT_beta"/>
    <property type="match status" value="1"/>
</dbReference>
<dbReference type="PRINTS" id="PR01369">
    <property type="entry name" value="INTIMIN"/>
</dbReference>
<gene>
    <name type="primary">eaeH</name>
    <name type="ordered locus">b0297</name>
    <name type="ordered locus">JW0291</name>
</gene>
<sequence>MSHYKTGHKQPRFRYSVLARCVAWANISVQVLFPLAVTFTPVMAARAQHAVQPRLSMGNTTVTADNNVEKNVASFAANAGTFLSSQPDSDATRNFITGMATAKANQEIQEWLGKYGTARVKLNVDKDFSLKDSSLEMLYPIYDTPTNMLFTQGAIHRTDDRTQSNIGFGWRHFSGNDWMAGVNTFIDHDLSRSHTRIGVGAEYWRDYLKLSANGYIRASGWKKSPDIEDYQERPANGWDIRAEGYLPAWPQLGASLMYEQYYGDEVGLFGKDKRQKDPHAISAEVTYTPVPLTQQ</sequence>
<protein>
    <recommendedName>
        <fullName>Putative attaching and effacing protein homolog</fullName>
    </recommendedName>
</protein>
<accession>P36943</accession>
<accession>P77261</accession>
<accession>Q2MCC4</accession>